<proteinExistence type="inferred from homology"/>
<comment type="function">
    <text evidence="1">Hydrolyzes diadenosine 5',5'''-P1,P4-tetraphosphate to yield ADP.</text>
</comment>
<comment type="catalytic activity">
    <reaction evidence="1">
        <text>P(1),P(4)-bis(5'-adenosyl) tetraphosphate + H2O = 2 ADP + 2 H(+)</text>
        <dbReference type="Rhea" id="RHEA:24252"/>
        <dbReference type="ChEBI" id="CHEBI:15377"/>
        <dbReference type="ChEBI" id="CHEBI:15378"/>
        <dbReference type="ChEBI" id="CHEBI:58141"/>
        <dbReference type="ChEBI" id="CHEBI:456216"/>
        <dbReference type="EC" id="3.6.1.41"/>
    </reaction>
</comment>
<comment type="similarity">
    <text evidence="1">Belongs to the Ap4A hydrolase family.</text>
</comment>
<sequence>MAHYFVGDIQGCFAELQKLLAKVDFNPSRDELWAVGDLVARGPDSLATLRFFRSLGDSAKTVLGNHDLHLMALHGKLKRTKPSDNLTEILESPDISASIDWLRQQPLMRELPEHQLIMSHAGVPPLWSLEVLREEAALVSCALKQDDYLEALISQMYSDSAEQWDPSAIGIERLRYCINALTRMRYLYVDGRLDFDCKQPPENCTNPQLKPWFEFASPLRQSHTLVFGHWAALMGNVGDSKLKALDTGCCWGEHLTLWHLEKDQKITQKKLKKS</sequence>
<reference key="1">
    <citation type="submission" date="2008-12" db="EMBL/GenBank/DDBJ databases">
        <title>Complete sequence of chromosome of Shewanella baltica OS223.</title>
        <authorList>
            <consortium name="US DOE Joint Genome Institute"/>
            <person name="Lucas S."/>
            <person name="Copeland A."/>
            <person name="Lapidus A."/>
            <person name="Glavina del Rio T."/>
            <person name="Dalin E."/>
            <person name="Tice H."/>
            <person name="Bruce D."/>
            <person name="Goodwin L."/>
            <person name="Pitluck S."/>
            <person name="Chertkov O."/>
            <person name="Meincke L."/>
            <person name="Brettin T."/>
            <person name="Detter J.C."/>
            <person name="Han C."/>
            <person name="Kuske C.R."/>
            <person name="Larimer F."/>
            <person name="Land M."/>
            <person name="Hauser L."/>
            <person name="Kyrpides N."/>
            <person name="Ovchinnikova G."/>
            <person name="Brettar I."/>
            <person name="Rodrigues J."/>
            <person name="Konstantinidis K."/>
            <person name="Tiedje J."/>
        </authorList>
    </citation>
    <scope>NUCLEOTIDE SEQUENCE [LARGE SCALE GENOMIC DNA]</scope>
    <source>
        <strain>OS223</strain>
    </source>
</reference>
<gene>
    <name evidence="1" type="primary">apaH</name>
    <name type="ordered locus">Sbal223_3315</name>
</gene>
<evidence type="ECO:0000255" key="1">
    <source>
        <dbReference type="HAMAP-Rule" id="MF_00199"/>
    </source>
</evidence>
<dbReference type="EC" id="3.6.1.41" evidence="1"/>
<dbReference type="EMBL" id="CP001252">
    <property type="protein sequence ID" value="ACK47799.1"/>
    <property type="molecule type" value="Genomic_DNA"/>
</dbReference>
<dbReference type="RefSeq" id="WP_012588375.1">
    <property type="nucleotide sequence ID" value="NC_011663.1"/>
</dbReference>
<dbReference type="SMR" id="B8EB37"/>
<dbReference type="KEGG" id="sbp:Sbal223_3315"/>
<dbReference type="HOGENOM" id="CLU_056184_2_0_6"/>
<dbReference type="Proteomes" id="UP000002507">
    <property type="component" value="Chromosome"/>
</dbReference>
<dbReference type="GO" id="GO:0005737">
    <property type="term" value="C:cytoplasm"/>
    <property type="evidence" value="ECO:0007669"/>
    <property type="project" value="TreeGrafter"/>
</dbReference>
<dbReference type="GO" id="GO:0008803">
    <property type="term" value="F:bis(5'-nucleosyl)-tetraphosphatase (symmetrical) activity"/>
    <property type="evidence" value="ECO:0007669"/>
    <property type="project" value="UniProtKB-UniRule"/>
</dbReference>
<dbReference type="GO" id="GO:0016791">
    <property type="term" value="F:phosphatase activity"/>
    <property type="evidence" value="ECO:0007669"/>
    <property type="project" value="TreeGrafter"/>
</dbReference>
<dbReference type="GO" id="GO:0110154">
    <property type="term" value="P:RNA decapping"/>
    <property type="evidence" value="ECO:0007669"/>
    <property type="project" value="TreeGrafter"/>
</dbReference>
<dbReference type="CDD" id="cd07422">
    <property type="entry name" value="MPP_ApaH"/>
    <property type="match status" value="1"/>
</dbReference>
<dbReference type="Gene3D" id="3.60.21.10">
    <property type="match status" value="1"/>
</dbReference>
<dbReference type="HAMAP" id="MF_00199">
    <property type="entry name" value="ApaH"/>
    <property type="match status" value="1"/>
</dbReference>
<dbReference type="InterPro" id="IPR050126">
    <property type="entry name" value="Ap4A_hydrolase"/>
</dbReference>
<dbReference type="InterPro" id="IPR004617">
    <property type="entry name" value="ApaH"/>
</dbReference>
<dbReference type="InterPro" id="IPR004843">
    <property type="entry name" value="Calcineurin-like_PHP_ApaH"/>
</dbReference>
<dbReference type="InterPro" id="IPR029052">
    <property type="entry name" value="Metallo-depent_PP-like"/>
</dbReference>
<dbReference type="NCBIfam" id="TIGR00668">
    <property type="entry name" value="apaH"/>
    <property type="match status" value="1"/>
</dbReference>
<dbReference type="NCBIfam" id="NF001204">
    <property type="entry name" value="PRK00166.1"/>
    <property type="match status" value="1"/>
</dbReference>
<dbReference type="PANTHER" id="PTHR42850:SF11">
    <property type="entry name" value="BIS(5'-NUCLEOSYL)-TETRAPHOSPHATASE [SYMMETRICAL]"/>
    <property type="match status" value="1"/>
</dbReference>
<dbReference type="PANTHER" id="PTHR42850">
    <property type="entry name" value="METALLOPHOSPHOESTERASE"/>
    <property type="match status" value="1"/>
</dbReference>
<dbReference type="Pfam" id="PF00149">
    <property type="entry name" value="Metallophos"/>
    <property type="match status" value="1"/>
</dbReference>
<dbReference type="PIRSF" id="PIRSF000903">
    <property type="entry name" value="B5n-ttraPtase_sm"/>
    <property type="match status" value="1"/>
</dbReference>
<dbReference type="SUPFAM" id="SSF56300">
    <property type="entry name" value="Metallo-dependent phosphatases"/>
    <property type="match status" value="1"/>
</dbReference>
<accession>B8EB37</accession>
<keyword id="KW-0378">Hydrolase</keyword>
<name>APAH_SHEB2</name>
<organism>
    <name type="scientific">Shewanella baltica (strain OS223)</name>
    <dbReference type="NCBI Taxonomy" id="407976"/>
    <lineage>
        <taxon>Bacteria</taxon>
        <taxon>Pseudomonadati</taxon>
        <taxon>Pseudomonadota</taxon>
        <taxon>Gammaproteobacteria</taxon>
        <taxon>Alteromonadales</taxon>
        <taxon>Shewanellaceae</taxon>
        <taxon>Shewanella</taxon>
    </lineage>
</organism>
<feature type="chain" id="PRO_1000124455" description="Bis(5'-nucleosyl)-tetraphosphatase, symmetrical">
    <location>
        <begin position="1"/>
        <end position="274"/>
    </location>
</feature>
<protein>
    <recommendedName>
        <fullName evidence="1">Bis(5'-nucleosyl)-tetraphosphatase, symmetrical</fullName>
        <ecNumber evidence="1">3.6.1.41</ecNumber>
    </recommendedName>
    <alternativeName>
        <fullName evidence="1">Ap4A hydrolase</fullName>
    </alternativeName>
    <alternativeName>
        <fullName evidence="1">Diadenosine 5',5'''-P1,P4-tetraphosphate pyrophosphohydrolase</fullName>
    </alternativeName>
    <alternativeName>
        <fullName evidence="1">Diadenosine tetraphosphatase</fullName>
    </alternativeName>
</protein>